<gene>
    <name evidence="1" type="primary">folE2</name>
    <name type="ordered locus">Rsph17029_0501</name>
</gene>
<feature type="chain" id="PRO_0000292756" description="GTP cyclohydrolase FolE2">
    <location>
        <begin position="1"/>
        <end position="359"/>
    </location>
</feature>
<feature type="site" description="May be catalytically important" evidence="1">
    <location>
        <position position="218"/>
    </location>
</feature>
<accession>A3PH01</accession>
<reference key="1">
    <citation type="submission" date="2007-02" db="EMBL/GenBank/DDBJ databases">
        <title>Complete sequence of chromosome 1 of Rhodobacter sphaeroides ATCC 17029.</title>
        <authorList>
            <person name="Copeland A."/>
            <person name="Lucas S."/>
            <person name="Lapidus A."/>
            <person name="Barry K."/>
            <person name="Detter J.C."/>
            <person name="Glavina del Rio T."/>
            <person name="Hammon N."/>
            <person name="Israni S."/>
            <person name="Dalin E."/>
            <person name="Tice H."/>
            <person name="Pitluck S."/>
            <person name="Kiss H."/>
            <person name="Brettin T."/>
            <person name="Bruce D."/>
            <person name="Han C."/>
            <person name="Tapia R."/>
            <person name="Gilna P."/>
            <person name="Schmutz J."/>
            <person name="Larimer F."/>
            <person name="Land M."/>
            <person name="Hauser L."/>
            <person name="Kyrpides N."/>
            <person name="Mikhailova N."/>
            <person name="Richardson P."/>
            <person name="Mackenzie C."/>
            <person name="Choudhary M."/>
            <person name="Donohue T.J."/>
            <person name="Kaplan S."/>
        </authorList>
    </citation>
    <scope>NUCLEOTIDE SEQUENCE [LARGE SCALE GENOMIC DNA]</scope>
    <source>
        <strain>ATCC 17029 / ATH 2.4.9</strain>
    </source>
</reference>
<protein>
    <recommendedName>
        <fullName evidence="1">GTP cyclohydrolase FolE2</fullName>
        <ecNumber evidence="1">3.5.4.16</ecNumber>
    </recommendedName>
</protein>
<dbReference type="EC" id="3.5.4.16" evidence="1"/>
<dbReference type="EMBL" id="CP000577">
    <property type="protein sequence ID" value="ABN75617.1"/>
    <property type="molecule type" value="Genomic_DNA"/>
</dbReference>
<dbReference type="RefSeq" id="WP_002722743.1">
    <property type="nucleotide sequence ID" value="NC_009049.1"/>
</dbReference>
<dbReference type="SMR" id="A3PH01"/>
<dbReference type="GeneID" id="3719119"/>
<dbReference type="KEGG" id="rsh:Rsph17029_0501"/>
<dbReference type="HOGENOM" id="CLU_062816_0_1_5"/>
<dbReference type="UniPathway" id="UPA00848">
    <property type="reaction ID" value="UER00151"/>
</dbReference>
<dbReference type="GO" id="GO:0003934">
    <property type="term" value="F:GTP cyclohydrolase I activity"/>
    <property type="evidence" value="ECO:0007669"/>
    <property type="project" value="UniProtKB-UniRule"/>
</dbReference>
<dbReference type="GO" id="GO:0046654">
    <property type="term" value="P:tetrahydrofolate biosynthetic process"/>
    <property type="evidence" value="ECO:0007669"/>
    <property type="project" value="UniProtKB-UniRule"/>
</dbReference>
<dbReference type="Gene3D" id="3.10.270.10">
    <property type="entry name" value="Urate Oxidase"/>
    <property type="match status" value="1"/>
</dbReference>
<dbReference type="HAMAP" id="MF_01527_B">
    <property type="entry name" value="GTP_cyclohydrol_B"/>
    <property type="match status" value="1"/>
</dbReference>
<dbReference type="InterPro" id="IPR022838">
    <property type="entry name" value="GTP_cyclohydrolase_FolE2"/>
</dbReference>
<dbReference type="InterPro" id="IPR003801">
    <property type="entry name" value="GTP_cyclohydrolase_FolE2/MptA"/>
</dbReference>
<dbReference type="NCBIfam" id="NF010200">
    <property type="entry name" value="PRK13674.1-1"/>
    <property type="match status" value="1"/>
</dbReference>
<dbReference type="PANTHER" id="PTHR36445">
    <property type="entry name" value="GTP CYCLOHYDROLASE MPTA"/>
    <property type="match status" value="1"/>
</dbReference>
<dbReference type="PANTHER" id="PTHR36445:SF1">
    <property type="entry name" value="GTP CYCLOHYDROLASE MPTA"/>
    <property type="match status" value="1"/>
</dbReference>
<dbReference type="Pfam" id="PF02649">
    <property type="entry name" value="GCHY-1"/>
    <property type="match status" value="1"/>
</dbReference>
<evidence type="ECO:0000255" key="1">
    <source>
        <dbReference type="HAMAP-Rule" id="MF_01527"/>
    </source>
</evidence>
<comment type="function">
    <text evidence="1">Converts GTP to 7,8-dihydroneopterin triphosphate.</text>
</comment>
<comment type="catalytic activity">
    <reaction evidence="1">
        <text>GTP + H2O = 7,8-dihydroneopterin 3'-triphosphate + formate + H(+)</text>
        <dbReference type="Rhea" id="RHEA:17473"/>
        <dbReference type="ChEBI" id="CHEBI:15377"/>
        <dbReference type="ChEBI" id="CHEBI:15378"/>
        <dbReference type="ChEBI" id="CHEBI:15740"/>
        <dbReference type="ChEBI" id="CHEBI:37565"/>
        <dbReference type="ChEBI" id="CHEBI:58462"/>
        <dbReference type="EC" id="3.5.4.16"/>
    </reaction>
</comment>
<comment type="pathway">
    <text evidence="1">Cofactor biosynthesis; 7,8-dihydroneopterin triphosphate biosynthesis; 7,8-dihydroneopterin triphosphate from GTP: step 1/1.</text>
</comment>
<comment type="similarity">
    <text evidence="1">Belongs to the GTP cyclohydrolase IV family.</text>
</comment>
<proteinExistence type="inferred from homology"/>
<keyword id="KW-0378">Hydrolase</keyword>
<sequence length="359" mass="40175">MNILTPVAERLPSREEAEEALAVLRRWATHTPASDVAALAPEAPALVYPDLSRAYPRTFTVDEAYKASLPDLQNGPASLIVGAKAVIQHVGISNFRLPIRYHTRDNGDLQLETSVTGTVSLEAEKKGINMSRIMRSFYAHAEQAFSFEVIERALEDYKRDLESFDARIQMRFSFPVKVPSLRSGLTGWQYYDIALELVDRGGVRKEIMHLDFVYSSTCPCSLELSEHARRERGQLATPHSQRSVARISVEVRQGKCLWFEDLLDLVRSAVPTETQVMVKREDEQAFAELNAANPIFVEDAARSFCQALQSDPRIGDFRVVASHQESLHSHDAVSVLTEGPTFAAESLDPRLFSSLYHVG</sequence>
<organism>
    <name type="scientific">Cereibacter sphaeroides (strain ATCC 17029 / ATH 2.4.9)</name>
    <name type="common">Rhodobacter sphaeroides</name>
    <dbReference type="NCBI Taxonomy" id="349101"/>
    <lineage>
        <taxon>Bacteria</taxon>
        <taxon>Pseudomonadati</taxon>
        <taxon>Pseudomonadota</taxon>
        <taxon>Alphaproteobacteria</taxon>
        <taxon>Rhodobacterales</taxon>
        <taxon>Paracoccaceae</taxon>
        <taxon>Cereibacter</taxon>
    </lineage>
</organism>
<name>GCH4_CERS1</name>